<keyword id="KW-0346">Stress response</keyword>
<protein>
    <recommendedName>
        <fullName>11 kDa late embryogenesis abundant protein</fullName>
    </recommendedName>
    <alternativeName>
        <fullName>DS11</fullName>
    </alternativeName>
</protein>
<feature type="chain" id="PRO_0000221243" description="11 kDa late embryogenesis abundant protein">
    <location>
        <begin position="1"/>
        <end position="104"/>
    </location>
</feature>
<feature type="region of interest" description="Disordered" evidence="1">
    <location>
        <begin position="1"/>
        <end position="104"/>
    </location>
</feature>
<feature type="compositionally biased region" description="Low complexity" evidence="1">
    <location>
        <begin position="1"/>
        <end position="24"/>
    </location>
</feature>
<feature type="compositionally biased region" description="Basic and acidic residues" evidence="1">
    <location>
        <begin position="25"/>
        <end position="74"/>
    </location>
</feature>
<feature type="compositionally biased region" description="Polar residues" evidence="1">
    <location>
        <begin position="75"/>
        <end position="89"/>
    </location>
</feature>
<dbReference type="EMBL" id="X59700">
    <property type="protein sequence ID" value="CAA42221.1"/>
    <property type="molecule type" value="mRNA"/>
</dbReference>
<dbReference type="PIR" id="S23528">
    <property type="entry name" value="S23528"/>
</dbReference>
<dbReference type="RefSeq" id="XP_021988952.1">
    <property type="nucleotide sequence ID" value="XM_022133260.1"/>
</dbReference>
<dbReference type="SMR" id="P46515"/>
<dbReference type="EnsemblPlants" id="mRNA:HanXRQr2_Chr10g0432751">
    <property type="protein sequence ID" value="mRNA:HanXRQr2_Chr10g0432751"/>
    <property type="gene ID" value="HanXRQr2_Chr10g0432751"/>
</dbReference>
<dbReference type="GeneID" id="110885558"/>
<dbReference type="Gramene" id="mRNA:HanXRQr2_Chr10g0432751">
    <property type="protein sequence ID" value="mRNA:HanXRQr2_Chr10g0432751"/>
    <property type="gene ID" value="HanXRQr2_Chr10g0432751"/>
</dbReference>
<dbReference type="OMA" id="MQGVNEK"/>
<dbReference type="GO" id="GO:0009793">
    <property type="term" value="P:embryo development ending in seed dormancy"/>
    <property type="evidence" value="ECO:0007669"/>
    <property type="project" value="InterPro"/>
</dbReference>
<dbReference type="InterPro" id="IPR005513">
    <property type="entry name" value="LEA_1"/>
</dbReference>
<dbReference type="PANTHER" id="PTHR33493:SF2">
    <property type="entry name" value="LATE EMBRYOGENESIS ABUNDANT PROTEIN 46"/>
    <property type="match status" value="1"/>
</dbReference>
<dbReference type="PANTHER" id="PTHR33493">
    <property type="entry name" value="LATE EMBRYOGENESIS ABUNDANT PROTEIN 6-RELATED"/>
    <property type="match status" value="1"/>
</dbReference>
<dbReference type="Pfam" id="PF03760">
    <property type="entry name" value="LEA_1"/>
    <property type="match status" value="1"/>
</dbReference>
<comment type="function">
    <text>LEA proteins are late embryonic proteins abundant in higher plant seed embryos. They may play an essential role in seed survival and in controlling water exchanges during seed desiccation and imbibition.</text>
</comment>
<comment type="tissue specificity">
    <text>Maximally expressed in dry seeds. Also present in mid-maturation embryos.</text>
</comment>
<comment type="induction">
    <text>By abscisic acid (ABA), osmotic stress and heat shock.</text>
</comment>
<comment type="similarity">
    <text evidence="2">Belongs to the LEA type 1 family.</text>
</comment>
<proteinExistence type="evidence at transcript level"/>
<accession>P46515</accession>
<name>LEA11_HELAN</name>
<sequence>MQSGKNAAASAKETAANVAASAKAGMEKTKASLQEKGEKMTAHDPMQKEMAREKKEERKHEAEYEKQAAKEHNAAQKQTTGIGTGTHSYTTTNVTGHRTGTGGI</sequence>
<evidence type="ECO:0000256" key="1">
    <source>
        <dbReference type="SAM" id="MobiDB-lite"/>
    </source>
</evidence>
<evidence type="ECO:0000305" key="2"/>
<organism>
    <name type="scientific">Helianthus annuus</name>
    <name type="common">Common sunflower</name>
    <dbReference type="NCBI Taxonomy" id="4232"/>
    <lineage>
        <taxon>Eukaryota</taxon>
        <taxon>Viridiplantae</taxon>
        <taxon>Streptophyta</taxon>
        <taxon>Embryophyta</taxon>
        <taxon>Tracheophyta</taxon>
        <taxon>Spermatophyta</taxon>
        <taxon>Magnoliopsida</taxon>
        <taxon>eudicotyledons</taxon>
        <taxon>Gunneridae</taxon>
        <taxon>Pentapetalae</taxon>
        <taxon>asterids</taxon>
        <taxon>campanulids</taxon>
        <taxon>Asterales</taxon>
        <taxon>Asteraceae</taxon>
        <taxon>Asteroideae</taxon>
        <taxon>Heliantheae alliance</taxon>
        <taxon>Heliantheae</taxon>
        <taxon>Helianthus</taxon>
    </lineage>
</organism>
<reference key="1">
    <citation type="journal article" date="1992" name="Plant Mol. Biol.">
        <title>Developmental and environmental concurrent expression of sunflower dry-seed-stored low-molecular-weight heat-shock protein and Lea mRNAs.</title>
        <authorList>
            <person name="Almoguera C."/>
            <person name="Jordano J."/>
        </authorList>
    </citation>
    <scope>NUCLEOTIDE SEQUENCE [MRNA]</scope>
    <source>
        <strain>cv. Sunweed</strain>
        <tissue>Dry seed</tissue>
    </source>
</reference>